<accession>Q3IZZ6</accession>
<feature type="chain" id="PRO_1000001596" description="Recombination protein RecR">
    <location>
        <begin position="1"/>
        <end position="199"/>
    </location>
</feature>
<feature type="domain" description="Toprim" evidence="1">
    <location>
        <begin position="81"/>
        <end position="176"/>
    </location>
</feature>
<feature type="zinc finger region" description="C4-type" evidence="1">
    <location>
        <begin position="58"/>
        <end position="73"/>
    </location>
</feature>
<reference key="1">
    <citation type="submission" date="2005-09" db="EMBL/GenBank/DDBJ databases">
        <title>Complete sequence of chromosome 1 of Rhodobacter sphaeroides 2.4.1.</title>
        <authorList>
            <person name="Copeland A."/>
            <person name="Lucas S."/>
            <person name="Lapidus A."/>
            <person name="Barry K."/>
            <person name="Detter J.C."/>
            <person name="Glavina T."/>
            <person name="Hammon N."/>
            <person name="Israni S."/>
            <person name="Pitluck S."/>
            <person name="Richardson P."/>
            <person name="Mackenzie C."/>
            <person name="Choudhary M."/>
            <person name="Larimer F."/>
            <person name="Hauser L.J."/>
            <person name="Land M."/>
            <person name="Donohue T.J."/>
            <person name="Kaplan S."/>
        </authorList>
    </citation>
    <scope>NUCLEOTIDE SEQUENCE [LARGE SCALE GENOMIC DNA]</scope>
    <source>
        <strain>ATCC 17023 / DSM 158 / JCM 6121 / CCUG 31486 / LMG 2827 / NBRC 12203 / NCIMB 8253 / ATH 2.4.1.</strain>
    </source>
</reference>
<name>RECR_CERS4</name>
<protein>
    <recommendedName>
        <fullName evidence="1">Recombination protein RecR</fullName>
    </recommendedName>
</protein>
<organism>
    <name type="scientific">Cereibacter sphaeroides (strain ATCC 17023 / DSM 158 / JCM 6121 / CCUG 31486 / LMG 2827 / NBRC 12203 / NCIMB 8253 / ATH 2.4.1.)</name>
    <name type="common">Rhodobacter sphaeroides</name>
    <dbReference type="NCBI Taxonomy" id="272943"/>
    <lineage>
        <taxon>Bacteria</taxon>
        <taxon>Pseudomonadati</taxon>
        <taxon>Pseudomonadota</taxon>
        <taxon>Alphaproteobacteria</taxon>
        <taxon>Rhodobacterales</taxon>
        <taxon>Paracoccaceae</taxon>
        <taxon>Cereibacter</taxon>
    </lineage>
</organism>
<dbReference type="EMBL" id="CP000143">
    <property type="protein sequence ID" value="ABA79888.1"/>
    <property type="molecule type" value="Genomic_DNA"/>
</dbReference>
<dbReference type="RefSeq" id="WP_002720894.1">
    <property type="nucleotide sequence ID" value="NZ_CP030271.1"/>
</dbReference>
<dbReference type="RefSeq" id="YP_353789.1">
    <property type="nucleotide sequence ID" value="NC_007493.2"/>
</dbReference>
<dbReference type="SMR" id="Q3IZZ6"/>
<dbReference type="STRING" id="272943.RSP_0712"/>
<dbReference type="EnsemblBacteria" id="ABA79888">
    <property type="protein sequence ID" value="ABA79888"/>
    <property type="gene ID" value="RSP_0712"/>
</dbReference>
<dbReference type="GeneID" id="67447462"/>
<dbReference type="KEGG" id="rsp:RSP_0712"/>
<dbReference type="PATRIC" id="fig|272943.9.peg.2665"/>
<dbReference type="eggNOG" id="COG0353">
    <property type="taxonomic scope" value="Bacteria"/>
</dbReference>
<dbReference type="OrthoDB" id="9802672at2"/>
<dbReference type="PhylomeDB" id="Q3IZZ6"/>
<dbReference type="Proteomes" id="UP000002703">
    <property type="component" value="Chromosome 1"/>
</dbReference>
<dbReference type="GO" id="GO:0003677">
    <property type="term" value="F:DNA binding"/>
    <property type="evidence" value="ECO:0007669"/>
    <property type="project" value="UniProtKB-UniRule"/>
</dbReference>
<dbReference type="GO" id="GO:0008270">
    <property type="term" value="F:zinc ion binding"/>
    <property type="evidence" value="ECO:0007669"/>
    <property type="project" value="UniProtKB-KW"/>
</dbReference>
<dbReference type="GO" id="GO:0006310">
    <property type="term" value="P:DNA recombination"/>
    <property type="evidence" value="ECO:0007669"/>
    <property type="project" value="UniProtKB-UniRule"/>
</dbReference>
<dbReference type="GO" id="GO:0006281">
    <property type="term" value="P:DNA repair"/>
    <property type="evidence" value="ECO:0007669"/>
    <property type="project" value="UniProtKB-UniRule"/>
</dbReference>
<dbReference type="CDD" id="cd01025">
    <property type="entry name" value="TOPRIM_recR"/>
    <property type="match status" value="1"/>
</dbReference>
<dbReference type="Gene3D" id="3.40.1360.10">
    <property type="match status" value="1"/>
</dbReference>
<dbReference type="Gene3D" id="1.10.8.420">
    <property type="entry name" value="RecR Domain 1"/>
    <property type="match status" value="1"/>
</dbReference>
<dbReference type="HAMAP" id="MF_00017">
    <property type="entry name" value="RecR"/>
    <property type="match status" value="1"/>
</dbReference>
<dbReference type="InterPro" id="IPR000093">
    <property type="entry name" value="DNA_Rcmb_RecR"/>
</dbReference>
<dbReference type="InterPro" id="IPR023627">
    <property type="entry name" value="Rcmb_RecR"/>
</dbReference>
<dbReference type="InterPro" id="IPR015967">
    <property type="entry name" value="Rcmb_RecR_Znf"/>
</dbReference>
<dbReference type="InterPro" id="IPR006171">
    <property type="entry name" value="TOPRIM_dom"/>
</dbReference>
<dbReference type="InterPro" id="IPR034137">
    <property type="entry name" value="TOPRIM_RecR"/>
</dbReference>
<dbReference type="NCBIfam" id="TIGR00615">
    <property type="entry name" value="recR"/>
    <property type="match status" value="1"/>
</dbReference>
<dbReference type="PANTHER" id="PTHR30446">
    <property type="entry name" value="RECOMBINATION PROTEIN RECR"/>
    <property type="match status" value="1"/>
</dbReference>
<dbReference type="PANTHER" id="PTHR30446:SF0">
    <property type="entry name" value="RECOMBINATION PROTEIN RECR"/>
    <property type="match status" value="1"/>
</dbReference>
<dbReference type="Pfam" id="PF21175">
    <property type="entry name" value="RecR_C"/>
    <property type="match status" value="1"/>
</dbReference>
<dbReference type="Pfam" id="PF21176">
    <property type="entry name" value="RecR_HhH"/>
    <property type="match status" value="1"/>
</dbReference>
<dbReference type="Pfam" id="PF02132">
    <property type="entry name" value="RecR_ZnF"/>
    <property type="match status" value="1"/>
</dbReference>
<dbReference type="Pfam" id="PF13662">
    <property type="entry name" value="Toprim_4"/>
    <property type="match status" value="1"/>
</dbReference>
<dbReference type="SMART" id="SM00493">
    <property type="entry name" value="TOPRIM"/>
    <property type="match status" value="1"/>
</dbReference>
<dbReference type="SUPFAM" id="SSF111304">
    <property type="entry name" value="Recombination protein RecR"/>
    <property type="match status" value="1"/>
</dbReference>
<dbReference type="PROSITE" id="PS50880">
    <property type="entry name" value="TOPRIM"/>
    <property type="match status" value="1"/>
</dbReference>
<comment type="function">
    <text evidence="1">May play a role in DNA repair. It seems to be involved in an RecBC-independent recombinational process of DNA repair. It may act with RecF and RecO.</text>
</comment>
<comment type="similarity">
    <text evidence="1">Belongs to the RecR family.</text>
</comment>
<evidence type="ECO:0000255" key="1">
    <source>
        <dbReference type="HAMAP-Rule" id="MF_00017"/>
    </source>
</evidence>
<gene>
    <name evidence="1" type="primary">recR</name>
    <name type="ordered locus">RHOS4_23200</name>
    <name type="ORF">RSP_0712</name>
</gene>
<sequence>MAEAPGDIERLIELMARLPGLGPRSARRAVLLMLKKRGAVMAPLAQAMAEVATSARDCVRCGNITNADLCGICRDERRATGELCVVEDVADLWALERAGAFRGRYHVLGGVLSALDSVGPEELRIPRLAERVREEGISEVILALNATVDGQTTAHYIADVLEPSGVQVTSLAQGVPIGGELDYLDDGTIGAALRARRRF</sequence>
<keyword id="KW-0227">DNA damage</keyword>
<keyword id="KW-0233">DNA recombination</keyword>
<keyword id="KW-0234">DNA repair</keyword>
<keyword id="KW-0479">Metal-binding</keyword>
<keyword id="KW-1185">Reference proteome</keyword>
<keyword id="KW-0862">Zinc</keyword>
<keyword id="KW-0863">Zinc-finger</keyword>
<proteinExistence type="inferred from homology"/>